<accession>P0CU46</accession>
<reference key="1">
    <citation type="journal article" date="2012" name="PLoS ONE">
        <title>Two novel heat-soluble protein families abundantly expressed in an anhydrobiotic tardigrade.</title>
        <authorList>
            <person name="Yamaguchi A."/>
            <person name="Tanaka S."/>
            <person name="Yamaguchi S."/>
            <person name="Kuwahara H."/>
            <person name="Takamura C."/>
            <person name="Imajoh-Ohmi S."/>
            <person name="Horikawa D.D."/>
            <person name="Toyoda A."/>
            <person name="Katayama T."/>
            <person name="Arakawa K."/>
            <person name="Fujiyama A."/>
            <person name="Kubo T."/>
            <person name="Kunieda T."/>
        </authorList>
    </citation>
    <scope>DOMAIN</scope>
</reference>
<reference key="2">
    <citation type="journal article" date="2017" name="Mol. Cell">
        <title>Tardigrades use intrinsically disordered proteins to survive desiccation.</title>
        <authorList>
            <person name="Boothby T.C."/>
            <person name="Tapia H."/>
            <person name="Brozena A.H."/>
            <person name="Piszkiewicz S."/>
            <person name="Smith A.E."/>
            <person name="Giovannini I."/>
            <person name="Rebecchi L."/>
            <person name="Pielak G.J."/>
            <person name="Koshland D."/>
            <person name="Goldstein B."/>
        </authorList>
    </citation>
    <scope>FUNCTION</scope>
    <scope>INDUCTION</scope>
    <scope>DISRUPTION PHENOTYPE</scope>
</reference>
<reference key="3">
    <citation type="journal article" date="2021" name="Mol. Cell">
        <title>Reconsidering the 'glass transition' hypothesis of intrinsically unstructured CAHS proteins in desiccation tolerance of tardigrades.</title>
        <authorList>
            <person name="Arakawa K."/>
            <person name="Numata K."/>
        </authorList>
    </citation>
    <scope>FUNCTION</scope>
</reference>
<gene>
    <name evidence="6" type="primary">CAHS 86272</name>
    <name evidence="5" type="synonym">CAHS-b</name>
</gene>
<evidence type="ECO:0000255" key="1"/>
<evidence type="ECO:0000256" key="2">
    <source>
        <dbReference type="SAM" id="MobiDB-lite"/>
    </source>
</evidence>
<evidence type="ECO:0000269" key="3">
    <source>
    </source>
</evidence>
<evidence type="ECO:0000269" key="4">
    <source>
    </source>
</evidence>
<evidence type="ECO:0000303" key="5">
    <source>
    </source>
</evidence>
<evidence type="ECO:0000303" key="6">
    <source>
    </source>
</evidence>
<evidence type="ECO:0000305" key="7"/>
<evidence type="ECO:0000305" key="8">
    <source>
    </source>
</evidence>
<evidence type="ECO:0000305" key="9">
    <source>
    </source>
</evidence>
<evidence type="ECO:0000305" key="10">
    <source>
    </source>
</evidence>
<proteinExistence type="evidence at transcript level"/>
<name>CAHS2_HYPEX</name>
<dbReference type="SMR" id="P0CU46"/>
<dbReference type="GO" id="GO:0005737">
    <property type="term" value="C:cytoplasm"/>
    <property type="evidence" value="ECO:0007669"/>
    <property type="project" value="UniProtKB-SubCell"/>
</dbReference>
<dbReference type="GO" id="GO:0009269">
    <property type="term" value="P:response to desiccation"/>
    <property type="evidence" value="ECO:0000315"/>
    <property type="project" value="DisProt"/>
</dbReference>
<dbReference type="DisProt" id="DP01381"/>
<sequence length="237" mass="26329">MSQQYEKKVERTEVVYGGDRRVEGSASASAEKTTNYTHTEIRAPMVNPLPPIISTGAAGLAQEIVGEGFTASATRISGAAATTQVLESQASREQAFKDQEKYSREQAAIARAHDKDLEKKTEEYRKTAEAEAEKIRKELEKQHARDVEFRKDLVESAIDRQKREVDLEAKYAKKELEHERELAMNALEQSKMATNVQVQMDTAAGTTVSGGTTVSEHTEVHDGKEKKSLGEKIKSLF</sequence>
<keyword id="KW-0175">Coiled coil</keyword>
<keyword id="KW-0963">Cytoplasm</keyword>
<keyword id="KW-0677">Repeat</keyword>
<keyword id="KW-0346">Stress response</keyword>
<feature type="chain" id="PRO_0000440191" description="Cytosolic-abundant heat soluble protein 86272">
    <location>
        <begin position="1"/>
        <end position="237"/>
    </location>
</feature>
<feature type="region of interest" description="Disordered" evidence="2">
    <location>
        <begin position="96"/>
        <end position="125"/>
    </location>
</feature>
<feature type="region of interest" description="CAHS motif 1" evidence="8">
    <location>
        <begin position="124"/>
        <end position="142"/>
    </location>
</feature>
<feature type="region of interest" description="CAHS motif 2" evidence="8">
    <location>
        <begin position="161"/>
        <end position="179"/>
    </location>
</feature>
<feature type="region of interest" description="Disordered" evidence="2">
    <location>
        <begin position="204"/>
        <end position="237"/>
    </location>
</feature>
<feature type="coiled-coil region" evidence="1">
    <location>
        <begin position="115"/>
        <end position="193"/>
    </location>
</feature>
<feature type="compositionally biased region" description="Basic and acidic residues" evidence="2">
    <location>
        <begin position="111"/>
        <end position="125"/>
    </location>
</feature>
<feature type="compositionally biased region" description="Low complexity" evidence="2">
    <location>
        <begin position="204"/>
        <end position="215"/>
    </location>
</feature>
<feature type="compositionally biased region" description="Basic and acidic residues" evidence="2">
    <location>
        <begin position="216"/>
        <end position="237"/>
    </location>
</feature>
<comment type="function">
    <text evidence="3 4 10">CAHS proteins are cytosolic heat soluble proteins that seem to contribute to the anhydrobiosis in tardigrades, but their specific mechanisms are yet to be identified (PubMed:28306513, PubMed:33545053). It is possible that protection during anhydrobiosis might occur via the stabilization of vitrifying small molecules such as sugars, but not via the direct glass transition of CAHS proteins themselves (Probable).</text>
</comment>
<comment type="subcellular location">
    <subcellularLocation>
        <location evidence="9">Cytoplasm</location>
    </subcellularLocation>
</comment>
<comment type="induction">
    <text evidence="3">Expression is highly induced during desiccation (PubMed:28306513).</text>
</comment>
<comment type="domain">
    <text evidence="8">CAHS proteins contain 2 repeats of 19-mer peptides designated as CAHS-motifs that comprise each two octapeptides connected by a tripeptide (PubMed:22937162).</text>
</comment>
<comment type="disruption phenotype">
    <text evidence="3">Affects slightly survival under dry conditions but does not affect survival under frozen conditions (PubMed:28306513).</text>
</comment>
<comment type="miscellaneous">
    <text evidence="3">Trehalose, a disaccharide essential for several organisms to survive drying, is detected at low levels or not at all in some tardigrade species, indicating that tardigrades possess potentially novel mechanisms for surviving desiccation involving tardigrade-specific intrinsically disordered proteins (TDPs) (PubMed:28306513).</text>
</comment>
<comment type="similarity">
    <text evidence="7">Belongs to the Cytosolic-abundant heat soluble protein (CAHS) family.</text>
</comment>
<comment type="caution">
    <text evidence="3 4">It was suggested that CAHS proteins were intrinsically unstructured and show heat-dependent glass transition, which contributes to the vitrification of cells, and this further leads to desiccation tolerance (PubMed:28306513). However, more recent studies led to the conclusion that there was no evidence supporting glass transition of CAHS proteins to be contributing to the glass transition of the whole tardigrade (PubMed:33545053).</text>
</comment>
<protein>
    <recommendedName>
        <fullName evidence="6">Cytosolic-abundant heat soluble protein 86272</fullName>
        <shortName evidence="6">CAHS 86272</shortName>
    </recommendedName>
    <alternativeName>
        <fullName evidence="5">Cytosolic-abundant heat soluble protein b</fullName>
        <shortName evidence="5">SAHS-b</shortName>
    </alternativeName>
    <alternativeName>
        <fullName evidence="6">Tardigrade-specific intrinsically disordered protein CAHS 86272</fullName>
        <shortName evidence="6">TDP CAHS 86272</shortName>
    </alternativeName>
</protein>
<organism evidence="6">
    <name type="scientific">Hypsibius exemplaris</name>
    <name type="common">Freshwater tardigrade</name>
    <dbReference type="NCBI Taxonomy" id="2072580"/>
    <lineage>
        <taxon>Eukaryota</taxon>
        <taxon>Metazoa</taxon>
        <taxon>Ecdysozoa</taxon>
        <taxon>Tardigrada</taxon>
        <taxon>Eutardigrada</taxon>
        <taxon>Parachela</taxon>
        <taxon>Hypsibioidea</taxon>
        <taxon>Hypsibiidae</taxon>
        <taxon>Hypsibius</taxon>
    </lineage>
</organism>